<gene>
    <name evidence="1" type="primary">hmuV</name>
    <name type="ordered locus">mll1149</name>
</gene>
<accession>Q98L75</accession>
<keyword id="KW-0067">ATP-binding</keyword>
<keyword id="KW-0997">Cell inner membrane</keyword>
<keyword id="KW-1003">Cell membrane</keyword>
<keyword id="KW-0472">Membrane</keyword>
<keyword id="KW-0547">Nucleotide-binding</keyword>
<keyword id="KW-1278">Translocase</keyword>
<keyword id="KW-0813">Transport</keyword>
<feature type="chain" id="PRO_0000269618" description="Hemin import ATP-binding protein HmuV">
    <location>
        <begin position="1"/>
        <end position="263"/>
    </location>
</feature>
<feature type="domain" description="ABC transporter" evidence="1">
    <location>
        <begin position="2"/>
        <end position="242"/>
    </location>
</feature>
<feature type="binding site" evidence="1">
    <location>
        <begin position="34"/>
        <end position="41"/>
    </location>
    <ligand>
        <name>ATP</name>
        <dbReference type="ChEBI" id="CHEBI:30616"/>
    </ligand>
</feature>
<reference key="1">
    <citation type="journal article" date="2000" name="DNA Res.">
        <title>Complete genome structure of the nitrogen-fixing symbiotic bacterium Mesorhizobium loti.</title>
        <authorList>
            <person name="Kaneko T."/>
            <person name="Nakamura Y."/>
            <person name="Sato S."/>
            <person name="Asamizu E."/>
            <person name="Kato T."/>
            <person name="Sasamoto S."/>
            <person name="Watanabe A."/>
            <person name="Idesawa K."/>
            <person name="Ishikawa A."/>
            <person name="Kawashima K."/>
            <person name="Kimura T."/>
            <person name="Kishida Y."/>
            <person name="Kiyokawa C."/>
            <person name="Kohara M."/>
            <person name="Matsumoto M."/>
            <person name="Matsuno A."/>
            <person name="Mochizuki Y."/>
            <person name="Nakayama S."/>
            <person name="Nakazaki N."/>
            <person name="Shimpo S."/>
            <person name="Sugimoto M."/>
            <person name="Takeuchi C."/>
            <person name="Yamada M."/>
            <person name="Tabata S."/>
        </authorList>
    </citation>
    <scope>NUCLEOTIDE SEQUENCE [LARGE SCALE GENOMIC DNA]</scope>
    <source>
        <strain>LMG 29417 / CECT 9101 / MAFF 303099</strain>
    </source>
</reference>
<protein>
    <recommendedName>
        <fullName evidence="1">Hemin import ATP-binding protein HmuV</fullName>
        <ecNumber evidence="1">7.6.2.-</ecNumber>
    </recommendedName>
</protein>
<name>HMUV_RHILO</name>
<sequence length="263" mass="28452">MIEARDVSVDIAGKRIVGGVDFDARPGEVAAIVGPNGSGKTTFLKALSGEFAYTGRIALNGHNLSSMRPAEMAVHRAVLPQATTLSFPFTVREVVKLGLVGGRSGALPGEDARLPERALARVDLDGFAGRFYQELSGGEQQRVQLARVLCQVWAPVLDGKPRYLFLDEPVSSLDIKHQLIIMNIARDFAKRGGGVVAILHDLNLTSMYADRIFVMHRGRLAATGSPQDVLSDDLIEKVFDCRLRVGVLPAGNMPFVLPQSSVY</sequence>
<organism>
    <name type="scientific">Mesorhizobium japonicum (strain LMG 29417 / CECT 9101 / MAFF 303099)</name>
    <name type="common">Mesorhizobium loti (strain MAFF 303099)</name>
    <dbReference type="NCBI Taxonomy" id="266835"/>
    <lineage>
        <taxon>Bacteria</taxon>
        <taxon>Pseudomonadati</taxon>
        <taxon>Pseudomonadota</taxon>
        <taxon>Alphaproteobacteria</taxon>
        <taxon>Hyphomicrobiales</taxon>
        <taxon>Phyllobacteriaceae</taxon>
        <taxon>Mesorhizobium</taxon>
    </lineage>
</organism>
<comment type="function">
    <text evidence="1">Part of the ABC transporter complex HmuTUV involved in hemin import. Responsible for energy coupling to the transport system.</text>
</comment>
<comment type="subunit">
    <text evidence="1">The complex is composed of two ATP-binding proteins (HmuV), two transmembrane proteins (HmuU) and a solute-binding protein (HmuT).</text>
</comment>
<comment type="subcellular location">
    <subcellularLocation>
        <location evidence="1">Cell inner membrane</location>
        <topology evidence="1">Peripheral membrane protein</topology>
    </subcellularLocation>
</comment>
<comment type="similarity">
    <text evidence="1">Belongs to the ABC transporter superfamily. Heme (hemin) importer (TC 3.A.1.14.5) family.</text>
</comment>
<dbReference type="EC" id="7.6.2.-" evidence="1"/>
<dbReference type="EMBL" id="BA000012">
    <property type="protein sequence ID" value="BAB48588.1"/>
    <property type="molecule type" value="Genomic_DNA"/>
</dbReference>
<dbReference type="RefSeq" id="WP_010909942.1">
    <property type="nucleotide sequence ID" value="NC_002678.2"/>
</dbReference>
<dbReference type="SMR" id="Q98L75"/>
<dbReference type="KEGG" id="mlo:mll1149"/>
<dbReference type="PATRIC" id="fig|266835.9.peg.925"/>
<dbReference type="eggNOG" id="COG4559">
    <property type="taxonomic scope" value="Bacteria"/>
</dbReference>
<dbReference type="HOGENOM" id="CLU_000604_1_11_5"/>
<dbReference type="Proteomes" id="UP000000552">
    <property type="component" value="Chromosome"/>
</dbReference>
<dbReference type="GO" id="GO:0005886">
    <property type="term" value="C:plasma membrane"/>
    <property type="evidence" value="ECO:0007669"/>
    <property type="project" value="UniProtKB-SubCell"/>
</dbReference>
<dbReference type="GO" id="GO:0005524">
    <property type="term" value="F:ATP binding"/>
    <property type="evidence" value="ECO:0007669"/>
    <property type="project" value="UniProtKB-KW"/>
</dbReference>
<dbReference type="GO" id="GO:0016887">
    <property type="term" value="F:ATP hydrolysis activity"/>
    <property type="evidence" value="ECO:0007669"/>
    <property type="project" value="InterPro"/>
</dbReference>
<dbReference type="CDD" id="cd03214">
    <property type="entry name" value="ABC_Iron-Siderophores_B12_Hemin"/>
    <property type="match status" value="1"/>
</dbReference>
<dbReference type="Gene3D" id="3.40.50.300">
    <property type="entry name" value="P-loop containing nucleotide triphosphate hydrolases"/>
    <property type="match status" value="1"/>
</dbReference>
<dbReference type="InterPro" id="IPR003593">
    <property type="entry name" value="AAA+_ATPase"/>
</dbReference>
<dbReference type="InterPro" id="IPR003439">
    <property type="entry name" value="ABC_transporter-like_ATP-bd"/>
</dbReference>
<dbReference type="InterPro" id="IPR017871">
    <property type="entry name" value="ABC_transporter-like_CS"/>
</dbReference>
<dbReference type="InterPro" id="IPR027417">
    <property type="entry name" value="P-loop_NTPase"/>
</dbReference>
<dbReference type="NCBIfam" id="NF010068">
    <property type="entry name" value="PRK13548.1"/>
    <property type="match status" value="1"/>
</dbReference>
<dbReference type="PANTHER" id="PTHR42794">
    <property type="entry name" value="HEMIN IMPORT ATP-BINDING PROTEIN HMUV"/>
    <property type="match status" value="1"/>
</dbReference>
<dbReference type="PANTHER" id="PTHR42794:SF1">
    <property type="entry name" value="HEMIN IMPORT ATP-BINDING PROTEIN HMUV"/>
    <property type="match status" value="1"/>
</dbReference>
<dbReference type="Pfam" id="PF00005">
    <property type="entry name" value="ABC_tran"/>
    <property type="match status" value="1"/>
</dbReference>
<dbReference type="SMART" id="SM00382">
    <property type="entry name" value="AAA"/>
    <property type="match status" value="1"/>
</dbReference>
<dbReference type="SUPFAM" id="SSF52540">
    <property type="entry name" value="P-loop containing nucleoside triphosphate hydrolases"/>
    <property type="match status" value="1"/>
</dbReference>
<dbReference type="PROSITE" id="PS00211">
    <property type="entry name" value="ABC_TRANSPORTER_1"/>
    <property type="match status" value="1"/>
</dbReference>
<dbReference type="PROSITE" id="PS50893">
    <property type="entry name" value="ABC_TRANSPORTER_2"/>
    <property type="match status" value="1"/>
</dbReference>
<dbReference type="PROSITE" id="PS51261">
    <property type="entry name" value="HMUV"/>
    <property type="match status" value="1"/>
</dbReference>
<evidence type="ECO:0000255" key="1">
    <source>
        <dbReference type="HAMAP-Rule" id="MF_01718"/>
    </source>
</evidence>
<proteinExistence type="inferred from homology"/>